<proteinExistence type="inferred from homology"/>
<accession>Q8D2R1</accession>
<protein>
    <recommendedName>
        <fullName evidence="1">Lipoprotein signal peptidase</fullName>
        <ecNumber evidence="1">3.4.23.36</ecNumber>
    </recommendedName>
    <alternativeName>
        <fullName evidence="1">Prolipoprotein signal peptidase</fullName>
    </alternativeName>
    <alternativeName>
        <fullName evidence="1">Signal peptidase II</fullName>
        <shortName evidence="1">SPase II</shortName>
    </alternativeName>
</protein>
<organism>
    <name type="scientific">Wigglesworthia glossinidia brevipalpis</name>
    <dbReference type="NCBI Taxonomy" id="36870"/>
    <lineage>
        <taxon>Bacteria</taxon>
        <taxon>Pseudomonadati</taxon>
        <taxon>Pseudomonadota</taxon>
        <taxon>Gammaproteobacteria</taxon>
        <taxon>Enterobacterales</taxon>
        <taxon>Erwiniaceae</taxon>
        <taxon>Wigglesworthia</taxon>
    </lineage>
</organism>
<name>LSPA_WIGBR</name>
<comment type="function">
    <text evidence="1">This protein specifically catalyzes the removal of signal peptides from prolipoproteins.</text>
</comment>
<comment type="catalytic activity">
    <reaction evidence="1">
        <text>Release of signal peptides from bacterial membrane prolipoproteins. Hydrolyzes -Xaa-Yaa-Zaa-|-(S,diacylglyceryl)Cys-, in which Xaa is hydrophobic (preferably Leu), and Yaa (Ala or Ser) and Zaa (Gly or Ala) have small, neutral side chains.</text>
        <dbReference type="EC" id="3.4.23.36"/>
    </reaction>
</comment>
<comment type="pathway">
    <text evidence="1">Protein modification; lipoprotein biosynthesis (signal peptide cleavage).</text>
</comment>
<comment type="subcellular location">
    <subcellularLocation>
        <location evidence="1">Cell membrane</location>
        <topology evidence="1">Multi-pass membrane protein</topology>
    </subcellularLocation>
</comment>
<comment type="similarity">
    <text evidence="1">Belongs to the peptidase A8 family.</text>
</comment>
<keyword id="KW-0064">Aspartyl protease</keyword>
<keyword id="KW-1003">Cell membrane</keyword>
<keyword id="KW-0378">Hydrolase</keyword>
<keyword id="KW-0472">Membrane</keyword>
<keyword id="KW-0645">Protease</keyword>
<keyword id="KW-1185">Reference proteome</keyword>
<keyword id="KW-0812">Transmembrane</keyword>
<keyword id="KW-1133">Transmembrane helix</keyword>
<feature type="chain" id="PRO_0000178834" description="Lipoprotein signal peptidase">
    <location>
        <begin position="1"/>
        <end position="153"/>
    </location>
</feature>
<feature type="transmembrane region" description="Helical" evidence="1">
    <location>
        <begin position="7"/>
        <end position="27"/>
    </location>
</feature>
<feature type="transmembrane region" description="Helical" evidence="1">
    <location>
        <begin position="59"/>
        <end position="79"/>
    </location>
</feature>
<feature type="transmembrane region" description="Helical" evidence="1">
    <location>
        <begin position="93"/>
        <end position="113"/>
    </location>
</feature>
<feature type="transmembrane region" description="Helical" evidence="1">
    <location>
        <begin position="123"/>
        <end position="143"/>
    </location>
</feature>
<feature type="active site" evidence="1">
    <location>
        <position position="114"/>
    </location>
</feature>
<feature type="active site" evidence="1">
    <location>
        <position position="132"/>
    </location>
</feature>
<evidence type="ECO:0000255" key="1">
    <source>
        <dbReference type="HAMAP-Rule" id="MF_00161"/>
    </source>
</evidence>
<gene>
    <name evidence="1" type="primary">lspA</name>
    <name type="ordered locus">WIGBR2930</name>
</gene>
<dbReference type="EC" id="3.4.23.36" evidence="1"/>
<dbReference type="EMBL" id="BA000021">
    <property type="protein sequence ID" value="BAC24439.1"/>
    <property type="molecule type" value="Genomic_DNA"/>
</dbReference>
<dbReference type="SMR" id="Q8D2R1"/>
<dbReference type="STRING" id="36870.gene:10368786"/>
<dbReference type="KEGG" id="wbr:lspA"/>
<dbReference type="eggNOG" id="COG0597">
    <property type="taxonomic scope" value="Bacteria"/>
</dbReference>
<dbReference type="HOGENOM" id="CLU_083252_4_3_6"/>
<dbReference type="OrthoDB" id="9810259at2"/>
<dbReference type="UniPathway" id="UPA00665"/>
<dbReference type="Proteomes" id="UP000000562">
    <property type="component" value="Chromosome"/>
</dbReference>
<dbReference type="GO" id="GO:0005886">
    <property type="term" value="C:plasma membrane"/>
    <property type="evidence" value="ECO:0007669"/>
    <property type="project" value="UniProtKB-SubCell"/>
</dbReference>
<dbReference type="GO" id="GO:0004190">
    <property type="term" value="F:aspartic-type endopeptidase activity"/>
    <property type="evidence" value="ECO:0007669"/>
    <property type="project" value="UniProtKB-UniRule"/>
</dbReference>
<dbReference type="GO" id="GO:0006508">
    <property type="term" value="P:proteolysis"/>
    <property type="evidence" value="ECO:0007669"/>
    <property type="project" value="UniProtKB-KW"/>
</dbReference>
<dbReference type="HAMAP" id="MF_00161">
    <property type="entry name" value="LspA"/>
    <property type="match status" value="1"/>
</dbReference>
<dbReference type="InterPro" id="IPR001872">
    <property type="entry name" value="Peptidase_A8"/>
</dbReference>
<dbReference type="NCBIfam" id="TIGR00077">
    <property type="entry name" value="lspA"/>
    <property type="match status" value="1"/>
</dbReference>
<dbReference type="PANTHER" id="PTHR33695">
    <property type="entry name" value="LIPOPROTEIN SIGNAL PEPTIDASE"/>
    <property type="match status" value="1"/>
</dbReference>
<dbReference type="PANTHER" id="PTHR33695:SF1">
    <property type="entry name" value="LIPOPROTEIN SIGNAL PEPTIDASE"/>
    <property type="match status" value="1"/>
</dbReference>
<dbReference type="Pfam" id="PF01252">
    <property type="entry name" value="Peptidase_A8"/>
    <property type="match status" value="1"/>
</dbReference>
<dbReference type="PRINTS" id="PR00781">
    <property type="entry name" value="LIPOSIGPTASE"/>
</dbReference>
<dbReference type="PROSITE" id="PS00855">
    <property type="entry name" value="SPASE_II"/>
    <property type="match status" value="1"/>
</dbReference>
<reference key="1">
    <citation type="journal article" date="2002" name="Nat. Genet.">
        <title>Genome sequence of the endocellular obligate symbiont of tsetse flies, Wigglesworthia glossinidia.</title>
        <authorList>
            <person name="Akman L."/>
            <person name="Yamashita A."/>
            <person name="Watanabe H."/>
            <person name="Oshima K."/>
            <person name="Shiba T."/>
            <person name="Hattori M."/>
            <person name="Aksoy S."/>
        </authorList>
    </citation>
    <scope>NUCLEOTIDE SEQUENCE [LARGE SCALE GENOMIC DNA]</scope>
</reference>
<sequence length="153" mass="18085">MKTKSNLIIISIFLIDFFTKKWILNNYEIFDSIKIFPMIKITYIRNYGIALGLFQSYSNLIRILIIVISIFILLFIFYMKNLCKDLLSNLGYSIIIGGSFGNIFDRIFYGSVIDFIDIYIYKWHFPVFNFADISIFIGFLILIYNKKIFIVNT</sequence>